<reference key="1">
    <citation type="journal article" date="2009" name="PLoS ONE">
        <title>Genome sequence of the pathogenic intestinal spirochete Brachyspira hyodysenteriae reveals adaptations to its lifestyle in the porcine large intestine.</title>
        <authorList>
            <person name="Bellgard M.I."/>
            <person name="Wanchanthuek P."/>
            <person name="La T."/>
            <person name="Ryan K."/>
            <person name="Moolhuijzen P."/>
            <person name="Albertyn Z."/>
            <person name="Shaban B."/>
            <person name="Motro Y."/>
            <person name="Dunn D.S."/>
            <person name="Schibeci D."/>
            <person name="Hunter A."/>
            <person name="Barrero R."/>
            <person name="Phillips N.D."/>
            <person name="Hampson D.J."/>
        </authorList>
    </citation>
    <scope>NUCLEOTIDE SEQUENCE [LARGE SCALE GENOMIC DNA]</scope>
    <source>
        <strain>ATCC 49526 / WA1</strain>
    </source>
</reference>
<name>RECR_BRAHW</name>
<sequence length="201" mass="22702">MNNIQSLDKLTQIISRLPGIGTRTAMRLALYLFDCDDEYLKEFSDVLSSLHENIKLCQVCYSLSDNDICDICSNDKREHNKICIVESYPDMLAIEKTEEYNGVYHILGGLISPLKGIGISDIRIKELIERVNNNSIEEIMIAFSASLEADTTASYIYKTLKDNNFNGRITRITYGISLASDIENADSRSLARSILDRVDMN</sequence>
<feature type="chain" id="PRO_1000195367" description="Recombination protein RecR">
    <location>
        <begin position="1"/>
        <end position="201"/>
    </location>
</feature>
<feature type="domain" description="Toprim" evidence="1">
    <location>
        <begin position="80"/>
        <end position="177"/>
    </location>
</feature>
<feature type="zinc finger region" description="C4-type" evidence="1">
    <location>
        <begin position="57"/>
        <end position="72"/>
    </location>
</feature>
<proteinExistence type="inferred from homology"/>
<organism>
    <name type="scientific">Brachyspira hyodysenteriae (strain ATCC 49526 / WA1)</name>
    <dbReference type="NCBI Taxonomy" id="565034"/>
    <lineage>
        <taxon>Bacteria</taxon>
        <taxon>Pseudomonadati</taxon>
        <taxon>Spirochaetota</taxon>
        <taxon>Spirochaetia</taxon>
        <taxon>Brachyspirales</taxon>
        <taxon>Brachyspiraceae</taxon>
        <taxon>Brachyspira</taxon>
    </lineage>
</organism>
<gene>
    <name evidence="1" type="primary">recR</name>
    <name type="ordered locus">BHWA1_00905</name>
</gene>
<keyword id="KW-0227">DNA damage</keyword>
<keyword id="KW-0233">DNA recombination</keyword>
<keyword id="KW-0234">DNA repair</keyword>
<keyword id="KW-0479">Metal-binding</keyword>
<keyword id="KW-0862">Zinc</keyword>
<keyword id="KW-0863">Zinc-finger</keyword>
<evidence type="ECO:0000255" key="1">
    <source>
        <dbReference type="HAMAP-Rule" id="MF_00017"/>
    </source>
</evidence>
<comment type="function">
    <text evidence="1">May play a role in DNA repair. It seems to be involved in an RecBC-independent recombinational process of DNA repair. It may act with RecF and RecO.</text>
</comment>
<comment type="similarity">
    <text evidence="1">Belongs to the RecR family.</text>
</comment>
<accession>C0QZV8</accession>
<protein>
    <recommendedName>
        <fullName evidence="1">Recombination protein RecR</fullName>
    </recommendedName>
</protein>
<dbReference type="EMBL" id="CP001357">
    <property type="protein sequence ID" value="ACN83396.1"/>
    <property type="molecule type" value="Genomic_DNA"/>
</dbReference>
<dbReference type="RefSeq" id="WP_012670445.1">
    <property type="nucleotide sequence ID" value="NC_012225.1"/>
</dbReference>
<dbReference type="SMR" id="C0QZV8"/>
<dbReference type="STRING" id="565034.BHWA1_00905"/>
<dbReference type="KEGG" id="bhy:BHWA1_00905"/>
<dbReference type="eggNOG" id="COG0353">
    <property type="taxonomic scope" value="Bacteria"/>
</dbReference>
<dbReference type="HOGENOM" id="CLU_060739_1_0_12"/>
<dbReference type="Proteomes" id="UP000001803">
    <property type="component" value="Chromosome"/>
</dbReference>
<dbReference type="GO" id="GO:0003677">
    <property type="term" value="F:DNA binding"/>
    <property type="evidence" value="ECO:0007669"/>
    <property type="project" value="UniProtKB-UniRule"/>
</dbReference>
<dbReference type="GO" id="GO:0008270">
    <property type="term" value="F:zinc ion binding"/>
    <property type="evidence" value="ECO:0007669"/>
    <property type="project" value="UniProtKB-KW"/>
</dbReference>
<dbReference type="GO" id="GO:0006310">
    <property type="term" value="P:DNA recombination"/>
    <property type="evidence" value="ECO:0007669"/>
    <property type="project" value="UniProtKB-UniRule"/>
</dbReference>
<dbReference type="GO" id="GO:0006281">
    <property type="term" value="P:DNA repair"/>
    <property type="evidence" value="ECO:0007669"/>
    <property type="project" value="UniProtKB-UniRule"/>
</dbReference>
<dbReference type="CDD" id="cd01025">
    <property type="entry name" value="TOPRIM_recR"/>
    <property type="match status" value="1"/>
</dbReference>
<dbReference type="Gene3D" id="3.40.1360.10">
    <property type="match status" value="1"/>
</dbReference>
<dbReference type="Gene3D" id="1.10.8.420">
    <property type="entry name" value="RecR Domain 1"/>
    <property type="match status" value="1"/>
</dbReference>
<dbReference type="HAMAP" id="MF_00017">
    <property type="entry name" value="RecR"/>
    <property type="match status" value="1"/>
</dbReference>
<dbReference type="InterPro" id="IPR000093">
    <property type="entry name" value="DNA_Rcmb_RecR"/>
</dbReference>
<dbReference type="InterPro" id="IPR023627">
    <property type="entry name" value="Rcmb_RecR"/>
</dbReference>
<dbReference type="InterPro" id="IPR015967">
    <property type="entry name" value="Rcmb_RecR_Znf"/>
</dbReference>
<dbReference type="InterPro" id="IPR006171">
    <property type="entry name" value="TOPRIM_dom"/>
</dbReference>
<dbReference type="InterPro" id="IPR034137">
    <property type="entry name" value="TOPRIM_RecR"/>
</dbReference>
<dbReference type="NCBIfam" id="TIGR00615">
    <property type="entry name" value="recR"/>
    <property type="match status" value="1"/>
</dbReference>
<dbReference type="PANTHER" id="PTHR30446">
    <property type="entry name" value="RECOMBINATION PROTEIN RECR"/>
    <property type="match status" value="1"/>
</dbReference>
<dbReference type="PANTHER" id="PTHR30446:SF0">
    <property type="entry name" value="RECOMBINATION PROTEIN RECR"/>
    <property type="match status" value="1"/>
</dbReference>
<dbReference type="Pfam" id="PF21176">
    <property type="entry name" value="RecR_HhH"/>
    <property type="match status" value="1"/>
</dbReference>
<dbReference type="Pfam" id="PF02132">
    <property type="entry name" value="RecR_ZnF"/>
    <property type="match status" value="1"/>
</dbReference>
<dbReference type="Pfam" id="PF13662">
    <property type="entry name" value="Toprim_4"/>
    <property type="match status" value="1"/>
</dbReference>
<dbReference type="SMART" id="SM00493">
    <property type="entry name" value="TOPRIM"/>
    <property type="match status" value="1"/>
</dbReference>
<dbReference type="SUPFAM" id="SSF111304">
    <property type="entry name" value="Recombination protein RecR"/>
    <property type="match status" value="1"/>
</dbReference>
<dbReference type="PROSITE" id="PS50880">
    <property type="entry name" value="TOPRIM"/>
    <property type="match status" value="1"/>
</dbReference>